<organism>
    <name type="scientific">Azorhizobium caulinodans (strain ATCC 43989 / DSM 5975 / JCM 20966 / LMG 6465 / NBRC 14845 / NCIMB 13405 / ORS 571)</name>
    <dbReference type="NCBI Taxonomy" id="438753"/>
    <lineage>
        <taxon>Bacteria</taxon>
        <taxon>Pseudomonadati</taxon>
        <taxon>Pseudomonadota</taxon>
        <taxon>Alphaproteobacteria</taxon>
        <taxon>Hyphomicrobiales</taxon>
        <taxon>Xanthobacteraceae</taxon>
        <taxon>Azorhizobium</taxon>
    </lineage>
</organism>
<protein>
    <recommendedName>
        <fullName evidence="1">DNA gyrase inhibitor YacG</fullName>
    </recommendedName>
</protein>
<sequence length="68" mass="7650">MSDETAKPFEPKPCPICGKPSIERYKPFCSKRCADVDLNRWLTGAYAIPVVEEEDEDGEPLSPPLRPE</sequence>
<dbReference type="EMBL" id="AP009384">
    <property type="protein sequence ID" value="BAF89142.1"/>
    <property type="molecule type" value="Genomic_DNA"/>
</dbReference>
<dbReference type="RefSeq" id="WP_012171668.1">
    <property type="nucleotide sequence ID" value="NC_009937.1"/>
</dbReference>
<dbReference type="SMR" id="A8IC06"/>
<dbReference type="STRING" id="438753.AZC_3144"/>
<dbReference type="KEGG" id="azc:AZC_3144"/>
<dbReference type="eggNOG" id="COG3024">
    <property type="taxonomic scope" value="Bacteria"/>
</dbReference>
<dbReference type="HOGENOM" id="CLU_178280_2_2_5"/>
<dbReference type="Proteomes" id="UP000000270">
    <property type="component" value="Chromosome"/>
</dbReference>
<dbReference type="GO" id="GO:0008657">
    <property type="term" value="F:DNA topoisomerase type II (double strand cut, ATP-hydrolyzing) inhibitor activity"/>
    <property type="evidence" value="ECO:0007669"/>
    <property type="project" value="UniProtKB-UniRule"/>
</dbReference>
<dbReference type="GO" id="GO:0008270">
    <property type="term" value="F:zinc ion binding"/>
    <property type="evidence" value="ECO:0007669"/>
    <property type="project" value="UniProtKB-UniRule"/>
</dbReference>
<dbReference type="GO" id="GO:0006355">
    <property type="term" value="P:regulation of DNA-templated transcription"/>
    <property type="evidence" value="ECO:0007669"/>
    <property type="project" value="InterPro"/>
</dbReference>
<dbReference type="Gene3D" id="3.30.50.10">
    <property type="entry name" value="Erythroid Transcription Factor GATA-1, subunit A"/>
    <property type="match status" value="1"/>
</dbReference>
<dbReference type="HAMAP" id="MF_00649">
    <property type="entry name" value="DNA_gyrase_inhibitor_YacG"/>
    <property type="match status" value="1"/>
</dbReference>
<dbReference type="InterPro" id="IPR005584">
    <property type="entry name" value="DNA_gyrase_inhibitor_YacG"/>
</dbReference>
<dbReference type="InterPro" id="IPR013088">
    <property type="entry name" value="Znf_NHR/GATA"/>
</dbReference>
<dbReference type="NCBIfam" id="NF002362">
    <property type="entry name" value="PRK01343.1"/>
    <property type="match status" value="1"/>
</dbReference>
<dbReference type="PANTHER" id="PTHR36150">
    <property type="entry name" value="DNA GYRASE INHIBITOR YACG"/>
    <property type="match status" value="1"/>
</dbReference>
<dbReference type="PANTHER" id="PTHR36150:SF1">
    <property type="entry name" value="DNA GYRASE INHIBITOR YACG"/>
    <property type="match status" value="1"/>
</dbReference>
<dbReference type="Pfam" id="PF03884">
    <property type="entry name" value="YacG"/>
    <property type="match status" value="1"/>
</dbReference>
<dbReference type="SUPFAM" id="SSF57716">
    <property type="entry name" value="Glucocorticoid receptor-like (DNA-binding domain)"/>
    <property type="match status" value="1"/>
</dbReference>
<accession>A8IC06</accession>
<name>YACG_AZOC5</name>
<evidence type="ECO:0000255" key="1">
    <source>
        <dbReference type="HAMAP-Rule" id="MF_00649"/>
    </source>
</evidence>
<comment type="function">
    <text evidence="1">Inhibits all the catalytic activities of DNA gyrase by preventing its interaction with DNA. Acts by binding directly to the C-terminal domain of GyrB, which probably disrupts DNA binding by the gyrase.</text>
</comment>
<comment type="cofactor">
    <cofactor evidence="1">
        <name>Zn(2+)</name>
        <dbReference type="ChEBI" id="CHEBI:29105"/>
    </cofactor>
    <text evidence="1">Binds 1 zinc ion.</text>
</comment>
<comment type="subunit">
    <text evidence="1">Interacts with GyrB.</text>
</comment>
<comment type="similarity">
    <text evidence="1">Belongs to the DNA gyrase inhibitor YacG family.</text>
</comment>
<gene>
    <name evidence="1" type="primary">yacG</name>
    <name type="ordered locus">AZC_3144</name>
</gene>
<proteinExistence type="inferred from homology"/>
<keyword id="KW-0479">Metal-binding</keyword>
<keyword id="KW-1185">Reference proteome</keyword>
<keyword id="KW-0862">Zinc</keyword>
<feature type="chain" id="PRO_1000072686" description="DNA gyrase inhibitor YacG">
    <location>
        <begin position="1"/>
        <end position="68"/>
    </location>
</feature>
<feature type="binding site" evidence="1">
    <location>
        <position position="14"/>
    </location>
    <ligand>
        <name>Zn(2+)</name>
        <dbReference type="ChEBI" id="CHEBI:29105"/>
    </ligand>
</feature>
<feature type="binding site" evidence="1">
    <location>
        <position position="17"/>
    </location>
    <ligand>
        <name>Zn(2+)</name>
        <dbReference type="ChEBI" id="CHEBI:29105"/>
    </ligand>
</feature>
<feature type="binding site" evidence="1">
    <location>
        <position position="29"/>
    </location>
    <ligand>
        <name>Zn(2+)</name>
        <dbReference type="ChEBI" id="CHEBI:29105"/>
    </ligand>
</feature>
<feature type="binding site" evidence="1">
    <location>
        <position position="33"/>
    </location>
    <ligand>
        <name>Zn(2+)</name>
        <dbReference type="ChEBI" id="CHEBI:29105"/>
    </ligand>
</feature>
<reference key="1">
    <citation type="submission" date="2007-04" db="EMBL/GenBank/DDBJ databases">
        <title>Complete genome sequence of the nitrogen-fixing bacterium Azorhizobium caulinodans ORS571.</title>
        <authorList>
            <person name="Lee K.B."/>
            <person name="Backer P.D."/>
            <person name="Aono T."/>
            <person name="Liu C.T."/>
            <person name="Suzuki S."/>
            <person name="Suzuki T."/>
            <person name="Kaneko T."/>
            <person name="Yamada M."/>
            <person name="Tabata S."/>
            <person name="Kupfer D.M."/>
            <person name="Najar F.Z."/>
            <person name="Wiley G.B."/>
            <person name="Roe B."/>
            <person name="Binnewies T."/>
            <person name="Ussery D."/>
            <person name="Vereecke D."/>
            <person name="Gevers D."/>
            <person name="Holsters M."/>
            <person name="Oyaizu H."/>
        </authorList>
    </citation>
    <scope>NUCLEOTIDE SEQUENCE [LARGE SCALE GENOMIC DNA]</scope>
    <source>
        <strain>ATCC 43989 / DSM 5975 / JCM 20966 / LMG 6465 / NBRC 14845 / NCIMB 13405 / ORS 571</strain>
    </source>
</reference>